<reference key="1">
    <citation type="journal article" date="2003" name="Proc. Natl. Acad. Sci. U.S.A.">
        <title>The complete genome sequence of Mycobacterium bovis.</title>
        <authorList>
            <person name="Garnier T."/>
            <person name="Eiglmeier K."/>
            <person name="Camus J.-C."/>
            <person name="Medina N."/>
            <person name="Mansoor H."/>
            <person name="Pryor M."/>
            <person name="Duthoy S."/>
            <person name="Grondin S."/>
            <person name="Lacroix C."/>
            <person name="Monsempe C."/>
            <person name="Simon S."/>
            <person name="Harris B."/>
            <person name="Atkin R."/>
            <person name="Doggett J."/>
            <person name="Mayes R."/>
            <person name="Keating L."/>
            <person name="Wheeler P.R."/>
            <person name="Parkhill J."/>
            <person name="Barrell B.G."/>
            <person name="Cole S.T."/>
            <person name="Gordon S.V."/>
            <person name="Hewinson R.G."/>
        </authorList>
    </citation>
    <scope>NUCLEOTIDE SEQUENCE [LARGE SCALE GENOMIC DNA]</scope>
    <source>
        <strain>ATCC BAA-935 / AF2122/97</strain>
    </source>
</reference>
<reference key="2">
    <citation type="journal article" date="2017" name="Genome Announc.">
        <title>Updated reference genome sequence and annotation of Mycobacterium bovis AF2122/97.</title>
        <authorList>
            <person name="Malone K.M."/>
            <person name="Farrell D."/>
            <person name="Stuber T.P."/>
            <person name="Schubert O.T."/>
            <person name="Aebersold R."/>
            <person name="Robbe-Austerman S."/>
            <person name="Gordon S.V."/>
        </authorList>
    </citation>
    <scope>NUCLEOTIDE SEQUENCE [LARGE SCALE GENOMIC DNA]</scope>
    <scope>GENOME REANNOTATION</scope>
    <source>
        <strain>ATCC BAA-935 / AF2122/97</strain>
    </source>
</reference>
<feature type="chain" id="PRO_0000194019" description="(3R)-3-[(carboxymethyl)amino]fatty acid oxygenase/decarboxylase">
    <location>
        <begin position="1"/>
        <end position="289"/>
    </location>
</feature>
<feature type="binding site" evidence="1">
    <location>
        <position position="65"/>
    </location>
    <ligand>
        <name>a (3R)-3-[(carboxymethyl)amino]fatty acid</name>
        <dbReference type="ChEBI" id="CHEBI:193080"/>
    </ligand>
</feature>
<feature type="binding site" evidence="1">
    <location>
        <position position="70"/>
    </location>
    <ligand>
        <name>a (3R)-3-[(carboxymethyl)amino]fatty acid</name>
        <dbReference type="ChEBI" id="CHEBI:193080"/>
    </ligand>
</feature>
<feature type="binding site" evidence="1">
    <location>
        <position position="93"/>
    </location>
    <ligand>
        <name>a (3R)-3-[(carboxymethyl)amino]fatty acid</name>
        <dbReference type="ChEBI" id="CHEBI:193080"/>
    </ligand>
</feature>
<feature type="binding site" evidence="1">
    <location>
        <position position="97"/>
    </location>
    <ligand>
        <name>Fe(2+)</name>
        <dbReference type="ChEBI" id="CHEBI:29033"/>
    </ligand>
</feature>
<feature type="binding site" evidence="1">
    <location>
        <position position="99"/>
    </location>
    <ligand>
        <name>Fe(2+)</name>
        <dbReference type="ChEBI" id="CHEBI:29033"/>
    </ligand>
</feature>
<feature type="binding site" evidence="1">
    <location>
        <position position="100"/>
    </location>
    <ligand>
        <name>a (3R)-3-[(carboxymethyl)amino]fatty acid</name>
        <dbReference type="ChEBI" id="CHEBI:193080"/>
    </ligand>
</feature>
<feature type="binding site" evidence="1">
    <location>
        <position position="158"/>
    </location>
    <ligand>
        <name>a (3R)-3-[(carboxymethyl)amino]fatty acid</name>
        <dbReference type="ChEBI" id="CHEBI:193080"/>
    </ligand>
</feature>
<feature type="binding site" evidence="1">
    <location>
        <position position="260"/>
    </location>
    <ligand>
        <name>Fe(2+)</name>
        <dbReference type="ChEBI" id="CHEBI:29033"/>
    </ligand>
</feature>
<feature type="binding site" evidence="1">
    <location>
        <position position="264"/>
    </location>
    <ligand>
        <name>2-oxoglutarate</name>
        <dbReference type="ChEBI" id="CHEBI:16810"/>
    </ligand>
</feature>
<feature type="binding site" evidence="1">
    <location>
        <position position="275"/>
    </location>
    <ligand>
        <name>a (3R)-3-[(carboxymethyl)amino]fatty acid</name>
        <dbReference type="ChEBI" id="CHEBI:193080"/>
    </ligand>
</feature>
<comment type="function">
    <text evidence="1">Involved in the biosynthesis of a unique class of isonitrile lipopeptides (INLPs) that seem to play a role in metal acquisition. Catalyzes the conversion of (3R)-3-[(carboxymethyl)amino]fatty acids to (3R)-3-isocyanyl-fatty acids through an oxidative decarboxylation mechanism, thereby generating the isonitrile group of INLPs.</text>
</comment>
<comment type="catalytic activity">
    <reaction evidence="1">
        <text>a (3R)-3-[(carboxymethyl)amino]fatty acid + 2 2-oxoglutarate + 2 O2 = a (3R)-3-isocyanyl-fatty acid + 2 succinate + 3 CO2 + 2 H2O</text>
        <dbReference type="Rhea" id="RHEA:74931"/>
        <dbReference type="ChEBI" id="CHEBI:15377"/>
        <dbReference type="ChEBI" id="CHEBI:15379"/>
        <dbReference type="ChEBI" id="CHEBI:16526"/>
        <dbReference type="ChEBI" id="CHEBI:16810"/>
        <dbReference type="ChEBI" id="CHEBI:30031"/>
        <dbReference type="ChEBI" id="CHEBI:193080"/>
        <dbReference type="ChEBI" id="CHEBI:193084"/>
        <dbReference type="EC" id="1.14.11.78"/>
    </reaction>
    <physiologicalReaction direction="left-to-right" evidence="1">
        <dbReference type="Rhea" id="RHEA:74932"/>
    </physiologicalReaction>
</comment>
<comment type="catalytic activity">
    <reaction evidence="1">
        <text>a (3R)-3-[(carboxymethyl)amino]fatty acid + 2-oxoglutarate + O2 = a (3R)-3-{[carboxy(hydroxy)methyl]amino}fatty acid + succinate + CO2</text>
        <dbReference type="Rhea" id="RHEA:74939"/>
        <dbReference type="ChEBI" id="CHEBI:15379"/>
        <dbReference type="ChEBI" id="CHEBI:16526"/>
        <dbReference type="ChEBI" id="CHEBI:16810"/>
        <dbReference type="ChEBI" id="CHEBI:30031"/>
        <dbReference type="ChEBI" id="CHEBI:193080"/>
        <dbReference type="ChEBI" id="CHEBI:193082"/>
    </reaction>
    <physiologicalReaction direction="left-to-right" evidence="1">
        <dbReference type="Rhea" id="RHEA:74940"/>
    </physiologicalReaction>
</comment>
<comment type="catalytic activity">
    <reaction evidence="1">
        <text>a (3R)-3-{[carboxy(hydroxy)methyl]amino}fatty acid + 2-oxoglutarate + O2 = a (3R)-3-isocyanyl-fatty acid + succinate + 2 CO2 + 2 H2O</text>
        <dbReference type="Rhea" id="RHEA:74943"/>
        <dbReference type="ChEBI" id="CHEBI:15377"/>
        <dbReference type="ChEBI" id="CHEBI:15379"/>
        <dbReference type="ChEBI" id="CHEBI:16526"/>
        <dbReference type="ChEBI" id="CHEBI:16810"/>
        <dbReference type="ChEBI" id="CHEBI:30031"/>
        <dbReference type="ChEBI" id="CHEBI:193082"/>
        <dbReference type="ChEBI" id="CHEBI:193084"/>
    </reaction>
    <physiologicalReaction direction="left-to-right" evidence="1">
        <dbReference type="Rhea" id="RHEA:74944"/>
    </physiologicalReaction>
</comment>
<comment type="cofactor">
    <cofactor evidence="1">
        <name>Fe(2+)</name>
        <dbReference type="ChEBI" id="CHEBI:29033"/>
    </cofactor>
</comment>
<comment type="miscellaneous">
    <text evidence="1">Isonitrile formation goes through two consecutive, but distinctive, 2-oxoglutarate-dpendent reactions catalyzed by this enzyme. In the first reaction, an Fe(IV)-oxo species is utilized to generate a (3R)-3-{[carboxy(hydroxy)methyl]amino}fatty acid. Then, its conversion into a (3R)-3-isocyanyl-fatty acid likely proceeds by decarboxylation-assisted desaturation.</text>
</comment>
<comment type="similarity">
    <text evidence="2">Belongs to the TfdA dioxygenase family.</text>
</comment>
<keyword id="KW-0223">Dioxygenase</keyword>
<keyword id="KW-0408">Iron</keyword>
<keyword id="KW-0479">Metal-binding</keyword>
<keyword id="KW-0560">Oxidoreductase</keyword>
<keyword id="KW-1185">Reference proteome</keyword>
<organism>
    <name type="scientific">Mycobacterium bovis (strain ATCC BAA-935 / AF2122/97)</name>
    <dbReference type="NCBI Taxonomy" id="233413"/>
    <lineage>
        <taxon>Bacteria</taxon>
        <taxon>Bacillati</taxon>
        <taxon>Actinomycetota</taxon>
        <taxon>Actinomycetes</taxon>
        <taxon>Mycobacteriales</taxon>
        <taxon>Mycobacteriaceae</taxon>
        <taxon>Mycobacterium</taxon>
        <taxon>Mycobacterium tuberculosis complex</taxon>
    </lineage>
</organism>
<proteinExistence type="inferred from homology"/>
<evidence type="ECO:0000250" key="1">
    <source>
        <dbReference type="UniProtKB" id="A0A3B6UEU3"/>
    </source>
</evidence>
<evidence type="ECO:0000305" key="2"/>
<protein>
    <recommendedName>
        <fullName>(3R)-3-[(carboxymethyl)amino]fatty acid oxygenase/decarboxylase</fullName>
        <ecNumber evidence="1">1.14.11.78</ecNumber>
    </recommendedName>
</protein>
<dbReference type="EC" id="1.14.11.78" evidence="1"/>
<dbReference type="EMBL" id="LT708304">
    <property type="protein sequence ID" value="SIT98503.1"/>
    <property type="molecule type" value="Genomic_DNA"/>
</dbReference>
<dbReference type="RefSeq" id="NP_853768.1">
    <property type="nucleotide sequence ID" value="NC_002945.3"/>
</dbReference>
<dbReference type="RefSeq" id="WP_003400786.1">
    <property type="nucleotide sequence ID" value="NC_002945.4"/>
</dbReference>
<dbReference type="SMR" id="P67756"/>
<dbReference type="PATRIC" id="fig|233413.5.peg.112"/>
<dbReference type="Proteomes" id="UP000001419">
    <property type="component" value="Chromosome"/>
</dbReference>
<dbReference type="GO" id="GO:0051213">
    <property type="term" value="F:dioxygenase activity"/>
    <property type="evidence" value="ECO:0007669"/>
    <property type="project" value="UniProtKB-KW"/>
</dbReference>
<dbReference type="GO" id="GO:0046872">
    <property type="term" value="F:metal ion binding"/>
    <property type="evidence" value="ECO:0007669"/>
    <property type="project" value="UniProtKB-KW"/>
</dbReference>
<dbReference type="Gene3D" id="3.60.130.10">
    <property type="entry name" value="Clavaminate synthase-like"/>
    <property type="match status" value="1"/>
</dbReference>
<dbReference type="InterPro" id="IPR042098">
    <property type="entry name" value="TauD-like_sf"/>
</dbReference>
<dbReference type="InterPro" id="IPR003819">
    <property type="entry name" value="TauD/TfdA-like"/>
</dbReference>
<dbReference type="InterPro" id="IPR051178">
    <property type="entry name" value="TfdA_dioxygenase"/>
</dbReference>
<dbReference type="PANTHER" id="PTHR43779:SF3">
    <property type="entry name" value="(3R)-3-[(CARBOXYMETHYL)AMINO]FATTY ACID OXYGENASE_DECARBOXYLASE"/>
    <property type="match status" value="1"/>
</dbReference>
<dbReference type="PANTHER" id="PTHR43779">
    <property type="entry name" value="DIOXYGENASE RV0097-RELATED"/>
    <property type="match status" value="1"/>
</dbReference>
<dbReference type="Pfam" id="PF02668">
    <property type="entry name" value="TauD"/>
    <property type="match status" value="1"/>
</dbReference>
<dbReference type="SUPFAM" id="SSF51197">
    <property type="entry name" value="Clavaminate synthase-like"/>
    <property type="match status" value="1"/>
</dbReference>
<accession>P67756</accession>
<accession>A0A1R3XUA9</accession>
<accession>Q10893</accession>
<accession>X2BE10</accession>
<gene>
    <name type="ordered locus">BQ2027_MB0100</name>
</gene>
<name>INLPE_MYCBO</name>
<sequence length="289" mass="32641">MTLKVKGEGLGAQVTGVDPKNLDDITTDEIRDIVYTNKLVVLKDVHPSPREFIKLGRIIGQIVPYYEPMYHHEDHPEIFVSSTEEGQGVPKTGAFWHIDYMFMPEPFAFSMVLPLAVPGHDRGTYFIDLARVWQSLPAAKRDPARGTVSTHDPRRHIKIRPSDVYRPIGEVWDEINRTTPPIKWPTVIRHPKTGQEILYICATGTTKIEDKDGNPVDPEVLQELMAATGQLDPEYQSPFIHTQHYQVGDIILWDNRVLMHRAKHGSAAGTLTTYRLTMLDGLKTPGYAA</sequence>